<comment type="function">
    <text evidence="1">Catalyzes the transfer of a methyl group to L-homocysteine resulting in methionine formation. The physiological methyl donor is unknown.</text>
</comment>
<comment type="cofactor">
    <cofactor evidence="1">
        <name>Zn(2+)</name>
        <dbReference type="ChEBI" id="CHEBI:29105"/>
    </cofactor>
    <text evidence="1">Binds 1 zinc ion per subunit.</text>
</comment>
<comment type="pathway">
    <text evidence="1">Amino-acid biosynthesis; L-methionine biosynthesis via de novo pathway.</text>
</comment>
<comment type="similarity">
    <text evidence="1 2">Belongs to the archaeal MetE family.</text>
</comment>
<name>METE_PYRFU</name>
<keyword id="KW-0028">Amino-acid biosynthesis</keyword>
<keyword id="KW-0479">Metal-binding</keyword>
<keyword id="KW-0486">Methionine biosynthesis</keyword>
<keyword id="KW-0489">Methyltransferase</keyword>
<keyword id="KW-1185">Reference proteome</keyword>
<keyword id="KW-0808">Transferase</keyword>
<keyword id="KW-0862">Zinc</keyword>
<gene>
    <name evidence="1" type="primary">metE</name>
    <name type="ordered locus">PF1269</name>
</gene>
<evidence type="ECO:0000255" key="1">
    <source>
        <dbReference type="HAMAP-Rule" id="MF_00288"/>
    </source>
</evidence>
<evidence type="ECO:0000305" key="2"/>
<feature type="chain" id="PRO_0000098688" description="Methionine synthase">
    <location>
        <begin position="1"/>
        <end position="338"/>
    </location>
</feature>
<feature type="binding site" evidence="1">
    <location>
        <position position="210"/>
    </location>
    <ligand>
        <name>Zn(2+)</name>
        <dbReference type="ChEBI" id="CHEBI:29105"/>
        <note>catalytic</note>
    </ligand>
</feature>
<feature type="binding site" evidence="1">
    <location>
        <position position="212"/>
    </location>
    <ligand>
        <name>Zn(2+)</name>
        <dbReference type="ChEBI" id="CHEBI:29105"/>
        <note>catalytic</note>
    </ligand>
</feature>
<feature type="binding site" evidence="1">
    <location>
        <position position="234"/>
    </location>
    <ligand>
        <name>Zn(2+)</name>
        <dbReference type="ChEBI" id="CHEBI:29105"/>
        <note>catalytic</note>
    </ligand>
</feature>
<feature type="binding site" evidence="1">
    <location>
        <position position="294"/>
    </location>
    <ligand>
        <name>Zn(2+)</name>
        <dbReference type="ChEBI" id="CHEBI:29105"/>
        <note>catalytic</note>
    </ligand>
</feature>
<proteinExistence type="inferred from homology"/>
<accession>Q8TH63</accession>
<protein>
    <recommendedName>
        <fullName evidence="1">Methionine synthase</fullName>
        <ecNumber evidence="1">2.1.1.-</ecNumber>
    </recommendedName>
    <alternativeName>
        <fullName evidence="1">Homocysteine methyltransferase</fullName>
    </alternativeName>
</protein>
<reference key="1">
    <citation type="journal article" date="1999" name="Genetics">
        <title>Divergence of the hyperthermophilic archaea Pyrococcus furiosus and P. horikoshii inferred from complete genomic sequences.</title>
        <authorList>
            <person name="Maeder D.L."/>
            <person name="Weiss R.B."/>
            <person name="Dunn D.M."/>
            <person name="Cherry J.L."/>
            <person name="Gonzalez J.M."/>
            <person name="DiRuggiero J."/>
            <person name="Robb F.T."/>
        </authorList>
    </citation>
    <scope>NUCLEOTIDE SEQUENCE [LARGE SCALE GENOMIC DNA]</scope>
    <source>
        <strain>ATCC 43587 / DSM 3638 / JCM 8422 / Vc1</strain>
    </source>
</reference>
<dbReference type="EC" id="2.1.1.-" evidence="1"/>
<dbReference type="EMBL" id="AE009950">
    <property type="protein sequence ID" value="AAL81393.1"/>
    <property type="molecule type" value="Genomic_DNA"/>
</dbReference>
<dbReference type="RefSeq" id="WP_011012413.1">
    <property type="nucleotide sequence ID" value="NZ_CP023154.1"/>
</dbReference>
<dbReference type="SMR" id="Q8TH63"/>
<dbReference type="STRING" id="186497.PF1269"/>
<dbReference type="PaxDb" id="186497-PF1269"/>
<dbReference type="KEGG" id="pfu:PF1269"/>
<dbReference type="PATRIC" id="fig|186497.12.peg.1331"/>
<dbReference type="eggNOG" id="arCOG01876">
    <property type="taxonomic scope" value="Archaea"/>
</dbReference>
<dbReference type="HOGENOM" id="CLU_040013_3_2_2"/>
<dbReference type="OrthoDB" id="17656at2157"/>
<dbReference type="PhylomeDB" id="Q8TH63"/>
<dbReference type="UniPathway" id="UPA00051"/>
<dbReference type="Proteomes" id="UP000001013">
    <property type="component" value="Chromosome"/>
</dbReference>
<dbReference type="GO" id="GO:0003871">
    <property type="term" value="F:5-methyltetrahydropteroyltriglutamate-homocysteine S-methyltransferase activity"/>
    <property type="evidence" value="ECO:0007669"/>
    <property type="project" value="InterPro"/>
</dbReference>
<dbReference type="GO" id="GO:0008270">
    <property type="term" value="F:zinc ion binding"/>
    <property type="evidence" value="ECO:0007669"/>
    <property type="project" value="InterPro"/>
</dbReference>
<dbReference type="GO" id="GO:0009086">
    <property type="term" value="P:methionine biosynthetic process"/>
    <property type="evidence" value="ECO:0007669"/>
    <property type="project" value="UniProtKB-UniRule"/>
</dbReference>
<dbReference type="GO" id="GO:0032259">
    <property type="term" value="P:methylation"/>
    <property type="evidence" value="ECO:0007669"/>
    <property type="project" value="UniProtKB-KW"/>
</dbReference>
<dbReference type="CDD" id="cd03311">
    <property type="entry name" value="CIMS_C_terminal_like"/>
    <property type="match status" value="1"/>
</dbReference>
<dbReference type="Gene3D" id="3.20.20.210">
    <property type="match status" value="1"/>
</dbReference>
<dbReference type="HAMAP" id="MF_00288">
    <property type="entry name" value="MetE"/>
    <property type="match status" value="1"/>
</dbReference>
<dbReference type="InterPro" id="IPR002629">
    <property type="entry name" value="Met_Synth_C/arc"/>
</dbReference>
<dbReference type="InterPro" id="IPR022921">
    <property type="entry name" value="MetE_arc"/>
</dbReference>
<dbReference type="InterPro" id="IPR038071">
    <property type="entry name" value="UROD/MetE-like_sf"/>
</dbReference>
<dbReference type="NCBIfam" id="NF003317">
    <property type="entry name" value="PRK04326.1"/>
    <property type="match status" value="1"/>
</dbReference>
<dbReference type="PANTHER" id="PTHR30519">
    <property type="entry name" value="5-METHYLTETRAHYDROPTEROYLTRIGLUTAMATE--HOMOCYSTEINE METHYLTRANSFERASE"/>
    <property type="match status" value="1"/>
</dbReference>
<dbReference type="Pfam" id="PF01717">
    <property type="entry name" value="Meth_synt_2"/>
    <property type="match status" value="1"/>
</dbReference>
<dbReference type="SUPFAM" id="SSF51726">
    <property type="entry name" value="UROD/MetE-like"/>
    <property type="match status" value="1"/>
</dbReference>
<organism>
    <name type="scientific">Pyrococcus furiosus (strain ATCC 43587 / DSM 3638 / JCM 8422 / Vc1)</name>
    <dbReference type="NCBI Taxonomy" id="186497"/>
    <lineage>
        <taxon>Archaea</taxon>
        <taxon>Methanobacteriati</taxon>
        <taxon>Methanobacteriota</taxon>
        <taxon>Thermococci</taxon>
        <taxon>Thermococcales</taxon>
        <taxon>Thermococcaceae</taxon>
        <taxon>Pyrococcus</taxon>
    </lineage>
</organism>
<sequence>MELPILPTSVIGSYPKPRWLLRMYKLRELGKIPEEDFKEAVRDASISVLREHERAGIDIPWDGEMGRSEMTEYFTSKIKGFKFYGPVRVWGNAYFNKAAAVDKLEYEEPLVLDEFLWVKENTTREIVKIPITGPYTIAEWSFNEYYPDKESFVMDLAEIINKELKVLEKHGAKFVQLDEPAMLNHPSEVPLAVDAINRAVKGIKMKVGLHVCYSNYNLLADYFDEIKVTQFALEFANRNFRDMDFLKKLSNKELGFGVVDVHNPRVESVEEIRQAIKKVFTYLEPEWVYINPDCGLKLLDRKIAYQKLVNMVQAVRGVRKELEKEGKTTIEFRTLKDI</sequence>